<organism>
    <name type="scientific">Salmonella typhimurium (strain LT2 / SGSC1412 / ATCC 700720)</name>
    <dbReference type="NCBI Taxonomy" id="99287"/>
    <lineage>
        <taxon>Bacteria</taxon>
        <taxon>Pseudomonadati</taxon>
        <taxon>Pseudomonadota</taxon>
        <taxon>Gammaproteobacteria</taxon>
        <taxon>Enterobacterales</taxon>
        <taxon>Enterobacteriaceae</taxon>
        <taxon>Salmonella</taxon>
    </lineage>
</organism>
<protein>
    <recommendedName>
        <fullName evidence="7">Oligopeptide transport system permease protein OppC</fullName>
    </recommendedName>
</protein>
<gene>
    <name evidence="6" type="primary">oppC</name>
    <name type="ordered locus">STM1744</name>
</gene>
<proteinExistence type="evidence at protein level"/>
<name>OPPC_SALTY</name>
<feature type="chain" id="PRO_0000060151" description="Oligopeptide transport system permease protein OppC">
    <location>
        <begin position="1"/>
        <end position="302"/>
    </location>
</feature>
<feature type="topological domain" description="Cytoplasmic" evidence="8">
    <location>
        <begin position="1"/>
        <end position="39"/>
    </location>
</feature>
<feature type="transmembrane region" description="Helical" evidence="1">
    <location>
        <begin position="40"/>
        <end position="62"/>
    </location>
</feature>
<feature type="topological domain" description="Periplasmic" evidence="8">
    <location>
        <begin position="63"/>
        <end position="102"/>
    </location>
</feature>
<feature type="transmembrane region" description="Helical" evidence="1">
    <location>
        <begin position="103"/>
        <end position="125"/>
    </location>
</feature>
<feature type="topological domain" description="Cytoplasmic" evidence="8">
    <location>
        <begin position="126"/>
        <end position="137"/>
    </location>
</feature>
<feature type="transmembrane region" description="Helical" evidence="1">
    <location>
        <begin position="138"/>
        <end position="160"/>
    </location>
</feature>
<feature type="topological domain" description="Periplasmic" evidence="8">
    <location>
        <begin position="161"/>
        <end position="163"/>
    </location>
</feature>
<feature type="transmembrane region" description="Helical" evidence="1">
    <location>
        <begin position="164"/>
        <end position="183"/>
    </location>
</feature>
<feature type="topological domain" description="Cytoplasmic" evidence="8">
    <location>
        <begin position="184"/>
        <end position="213"/>
    </location>
</feature>
<feature type="transmembrane region" description="Helical" evidence="1">
    <location>
        <begin position="214"/>
        <end position="236"/>
    </location>
</feature>
<feature type="topological domain" description="Periplasmic" evidence="8">
    <location>
        <begin position="237"/>
        <end position="267"/>
    </location>
</feature>
<feature type="transmembrane region" description="Helical" evidence="1">
    <location>
        <begin position="268"/>
        <end position="290"/>
    </location>
</feature>
<feature type="topological domain" description="Cytoplasmic" evidence="8">
    <location>
        <begin position="291"/>
        <end position="302"/>
    </location>
</feature>
<feature type="domain" description="ABC transmembrane type-1" evidence="2">
    <location>
        <begin position="101"/>
        <end position="290"/>
    </location>
</feature>
<reference key="1">
    <citation type="journal article" date="1987" name="J. Mol. Biol.">
        <title>Molecular characterization of the oligopeptide permease of Salmonella typhimurium.</title>
        <authorList>
            <person name="Hiles I.D."/>
            <person name="Gallagher M.P."/>
            <person name="Jamieson D.J."/>
            <person name="Higgins C.F."/>
        </authorList>
    </citation>
    <scope>NUCLEOTIDE SEQUENCE [GENOMIC DNA]</scope>
    <scope>FUNCTION</scope>
    <scope>SUBUNIT</scope>
    <scope>SUBCELLULAR LOCATION</scope>
    <scope>INDUCTION</scope>
    <source>
        <strain>LT2</strain>
    </source>
</reference>
<reference key="2">
    <citation type="journal article" date="2001" name="Nature">
        <title>Complete genome sequence of Salmonella enterica serovar Typhimurium LT2.</title>
        <authorList>
            <person name="McClelland M."/>
            <person name="Sanderson K.E."/>
            <person name="Spieth J."/>
            <person name="Clifton S.W."/>
            <person name="Latreille P."/>
            <person name="Courtney L."/>
            <person name="Porwollik S."/>
            <person name="Ali J."/>
            <person name="Dante M."/>
            <person name="Du F."/>
            <person name="Hou S."/>
            <person name="Layman D."/>
            <person name="Leonard S."/>
            <person name="Nguyen C."/>
            <person name="Scott K."/>
            <person name="Holmes A."/>
            <person name="Grewal N."/>
            <person name="Mulvaney E."/>
            <person name="Ryan E."/>
            <person name="Sun H."/>
            <person name="Florea L."/>
            <person name="Miller W."/>
            <person name="Stoneking T."/>
            <person name="Nhan M."/>
            <person name="Waterston R."/>
            <person name="Wilson R.K."/>
        </authorList>
    </citation>
    <scope>NUCLEOTIDE SEQUENCE [LARGE SCALE GENOMIC DNA]</scope>
    <source>
        <strain>LT2 / SGSC1412 / ATCC 700720</strain>
    </source>
</reference>
<reference key="3">
    <citation type="journal article" date="1987" name="J. Bacteriol.">
        <title>Uptake of cell wall peptides by Salmonella typhimurium and Escherichia coli.</title>
        <authorList>
            <person name="Goodell E.W."/>
            <person name="Higgins C.F."/>
        </authorList>
    </citation>
    <scope>FUNCTION</scope>
    <scope>DISRUPTION PHENOTYPE</scope>
    <source>
        <strain>LT2</strain>
    </source>
</reference>
<reference key="4">
    <citation type="journal article" date="1992" name="Mol. Microbiol.">
        <title>Membrane topology of the integral membrane components, OppB and OppC, of the oligopeptide permease of Salmonella typhimurium.</title>
        <authorList>
            <person name="Pearce S.R."/>
            <person name="Mimmack M.L."/>
            <person name="Gallagher M.P."/>
            <person name="Gileadi U."/>
            <person name="Hyde S.C."/>
            <person name="Higgins C.F."/>
        </authorList>
    </citation>
    <scope>FUNCTION</scope>
    <scope>SUBCELLULAR LOCATION</scope>
    <scope>TOPOLOGY</scope>
</reference>
<comment type="function">
    <text evidence="3 4 5">Part of the ABC transporter complex OppABCDF involved in the uptake of oligopeptides, including the cell wall murein tripeptide L-alanyl-gamma-D-glutamyl-meso-diaminopimelate (PubMed:2821267, PubMed:3301822). Responsible for the translocation of the substrate across the membrane (PubMed:1738314). Plays an important nutritional role and is involved in the recycling of cell wall peptides (PubMed:2821267, PubMed:3301822).</text>
</comment>
<comment type="subunit">
    <text evidence="4">The complex is composed of two ATP-binding proteins (OppD and OppF), two transmembrane proteins (OppB and OppC) and a solute-binding protein (OppA).</text>
</comment>
<comment type="subcellular location">
    <subcellularLocation>
        <location evidence="3 4">Cell inner membrane</location>
        <topology evidence="3">Multi-pass membrane protein</topology>
    </subcellularLocation>
</comment>
<comment type="induction">
    <text evidence="4">Part of the opp operon, which is constitutively expressed.</text>
</comment>
<comment type="disruption phenotype">
    <text evidence="5">Double mutant oppB-oppC cannot take up cell wall peptides.</text>
</comment>
<comment type="similarity">
    <text evidence="7">Belongs to the binding-protein-dependent transport system permease family. OppBC subfamily.</text>
</comment>
<evidence type="ECO:0000255" key="1"/>
<evidence type="ECO:0000255" key="2">
    <source>
        <dbReference type="PROSITE-ProRule" id="PRU00441"/>
    </source>
</evidence>
<evidence type="ECO:0000269" key="3">
    <source>
    </source>
</evidence>
<evidence type="ECO:0000269" key="4">
    <source>
    </source>
</evidence>
<evidence type="ECO:0000269" key="5">
    <source>
    </source>
</evidence>
<evidence type="ECO:0000303" key="6">
    <source>
    </source>
</evidence>
<evidence type="ECO:0000305" key="7"/>
<evidence type="ECO:0000305" key="8">
    <source>
    </source>
</evidence>
<keyword id="KW-0997">Cell inner membrane</keyword>
<keyword id="KW-1003">Cell membrane</keyword>
<keyword id="KW-0472">Membrane</keyword>
<keyword id="KW-0571">Peptide transport</keyword>
<keyword id="KW-0653">Protein transport</keyword>
<keyword id="KW-1185">Reference proteome</keyword>
<keyword id="KW-0812">Transmembrane</keyword>
<keyword id="KW-1133">Transmembrane helix</keyword>
<keyword id="KW-0813">Transport</keyword>
<sequence>MMLSKKNSETLENFSEKLEVEGRSLWQDARRRFMHNRAAVASLIVLFLIALFVTVAPMLSQFTYFDTDWGMMSSAPDMASGHYFGTDSSGRDLLVRVAIGGRISLMVGIAAALVAVIVGTLYGSLSGYLGGKIDSVMMRLLEILNSFPFMFFVILLVTFFGQNILLIFVAIGMVSWLDMARIVRGQTLSLKRKEFIEAAQVGGVSTASIVIRHIVPNVLGVVVVYASLLVPSMILFESFLSFLGLGTQEPLSSWGALLSDGANSMEVSPWLLLFPAGFLVVTLFCFNFIGDGLRDALDPKDR</sequence>
<dbReference type="EMBL" id="X05491">
    <property type="protein sequence ID" value="CAA29041.1"/>
    <property type="molecule type" value="Genomic_DNA"/>
</dbReference>
<dbReference type="EMBL" id="AE006468">
    <property type="protein sequence ID" value="AAL20662.1"/>
    <property type="molecule type" value="Genomic_DNA"/>
</dbReference>
<dbReference type="PIR" id="C29333">
    <property type="entry name" value="QREBOC"/>
</dbReference>
<dbReference type="RefSeq" id="NP_460703.1">
    <property type="nucleotide sequence ID" value="NC_003197.2"/>
</dbReference>
<dbReference type="RefSeq" id="WP_000979653.1">
    <property type="nucleotide sequence ID" value="NC_003197.2"/>
</dbReference>
<dbReference type="SMR" id="P08006"/>
<dbReference type="STRING" id="99287.STM1744"/>
<dbReference type="TCDB" id="3.A.1.5.1">
    <property type="family name" value="the atp-binding cassette (abc) superfamily"/>
</dbReference>
<dbReference type="PaxDb" id="99287-STM1744"/>
<dbReference type="GeneID" id="1253263"/>
<dbReference type="KEGG" id="stm:STM1744"/>
<dbReference type="PATRIC" id="fig|99287.12.peg.1841"/>
<dbReference type="HOGENOM" id="CLU_028518_1_3_6"/>
<dbReference type="OMA" id="IAWKHLV"/>
<dbReference type="PhylomeDB" id="P08006"/>
<dbReference type="BioCyc" id="SENT99287:STM1744-MONOMER"/>
<dbReference type="Proteomes" id="UP000001014">
    <property type="component" value="Chromosome"/>
</dbReference>
<dbReference type="GO" id="GO:0005886">
    <property type="term" value="C:plasma membrane"/>
    <property type="evidence" value="ECO:0000318"/>
    <property type="project" value="GO_Central"/>
</dbReference>
<dbReference type="GO" id="GO:0015640">
    <property type="term" value="F:peptidoglycan peptide transmembrane transporter activity"/>
    <property type="evidence" value="ECO:0000318"/>
    <property type="project" value="GO_Central"/>
</dbReference>
<dbReference type="GO" id="GO:0015031">
    <property type="term" value="P:protein transport"/>
    <property type="evidence" value="ECO:0007669"/>
    <property type="project" value="UniProtKB-KW"/>
</dbReference>
<dbReference type="CDD" id="cd06261">
    <property type="entry name" value="TM_PBP2"/>
    <property type="match status" value="1"/>
</dbReference>
<dbReference type="FunFam" id="1.10.3720.10:FF:000008">
    <property type="entry name" value="Oligopeptide ABC transporter permease OppC"/>
    <property type="match status" value="1"/>
</dbReference>
<dbReference type="Gene3D" id="1.10.3720.10">
    <property type="entry name" value="MetI-like"/>
    <property type="match status" value="1"/>
</dbReference>
<dbReference type="InterPro" id="IPR050366">
    <property type="entry name" value="BP-dependent_transpt_permease"/>
</dbReference>
<dbReference type="InterPro" id="IPR000515">
    <property type="entry name" value="MetI-like"/>
</dbReference>
<dbReference type="InterPro" id="IPR035906">
    <property type="entry name" value="MetI-like_sf"/>
</dbReference>
<dbReference type="InterPro" id="IPR025966">
    <property type="entry name" value="OppC_N"/>
</dbReference>
<dbReference type="NCBIfam" id="NF011935">
    <property type="entry name" value="PRK15406.1"/>
    <property type="match status" value="1"/>
</dbReference>
<dbReference type="PANTHER" id="PTHR43386">
    <property type="entry name" value="OLIGOPEPTIDE TRANSPORT SYSTEM PERMEASE PROTEIN APPC"/>
    <property type="match status" value="1"/>
</dbReference>
<dbReference type="PANTHER" id="PTHR43386:SF2">
    <property type="entry name" value="OLIGOPEPTIDE TRANSPORT SYSTEM PERMEASE PROTEIN OPPC"/>
    <property type="match status" value="1"/>
</dbReference>
<dbReference type="Pfam" id="PF00528">
    <property type="entry name" value="BPD_transp_1"/>
    <property type="match status" value="1"/>
</dbReference>
<dbReference type="Pfam" id="PF12911">
    <property type="entry name" value="OppC_N"/>
    <property type="match status" value="1"/>
</dbReference>
<dbReference type="SUPFAM" id="SSF161098">
    <property type="entry name" value="MetI-like"/>
    <property type="match status" value="1"/>
</dbReference>
<dbReference type="PROSITE" id="PS50928">
    <property type="entry name" value="ABC_TM1"/>
    <property type="match status" value="1"/>
</dbReference>
<accession>P08006</accession>